<reference key="1">
    <citation type="submission" date="2008-05" db="EMBL/GenBank/DDBJ databases">
        <title>Complete sequence of Shigella boydii serotype 18 strain BS512.</title>
        <authorList>
            <person name="Rasko D.A."/>
            <person name="Rosovitz M."/>
            <person name="Maurelli A.T."/>
            <person name="Myers G."/>
            <person name="Seshadri R."/>
            <person name="Cer R."/>
            <person name="Jiang L."/>
            <person name="Ravel J."/>
            <person name="Sebastian Y."/>
        </authorList>
    </citation>
    <scope>NUCLEOTIDE SEQUENCE [LARGE SCALE GENOMIC DNA]</scope>
    <source>
        <strain>CDC 3083-94 / BS512</strain>
    </source>
</reference>
<comment type="function">
    <text evidence="1">Part of the MsrPQ system that repairs oxidized periplasmic proteins containing methionine sulfoxide residues (Met-O), using respiratory chain electrons. Thus protects these proteins from oxidative-stress damage caused by reactive species of oxygen and chlorine generated by the host defense mechanisms. MsrPQ is essential for the maintenance of envelope integrity under bleach stress, rescuing a wide series of structurally unrelated periplasmic proteins from methionine oxidation, including the primary periplasmic chaperone SurA and the lipoprotein Pal. The catalytic subunit MsrP is non-stereospecific, being able to reduce both (R-) and (S-) diastereoisomers of methionine sulfoxide.</text>
</comment>
<comment type="catalytic activity">
    <reaction evidence="1">
        <text>L-methionyl-[protein] + a quinone + H2O = L-methionyl-(S)-S-oxide-[protein] + a quinol</text>
        <dbReference type="Rhea" id="RHEA:51292"/>
        <dbReference type="Rhea" id="RHEA-COMP:12313"/>
        <dbReference type="Rhea" id="RHEA-COMP:12315"/>
        <dbReference type="ChEBI" id="CHEBI:15377"/>
        <dbReference type="ChEBI" id="CHEBI:16044"/>
        <dbReference type="ChEBI" id="CHEBI:24646"/>
        <dbReference type="ChEBI" id="CHEBI:44120"/>
        <dbReference type="ChEBI" id="CHEBI:132124"/>
    </reaction>
</comment>
<comment type="catalytic activity">
    <reaction evidence="1">
        <text>L-methionyl-[protein] + a quinone + H2O = L-methionyl-(R)-S-oxide-[protein] + a quinol</text>
        <dbReference type="Rhea" id="RHEA:51296"/>
        <dbReference type="Rhea" id="RHEA-COMP:12313"/>
        <dbReference type="Rhea" id="RHEA-COMP:12314"/>
        <dbReference type="ChEBI" id="CHEBI:15377"/>
        <dbReference type="ChEBI" id="CHEBI:16044"/>
        <dbReference type="ChEBI" id="CHEBI:24646"/>
        <dbReference type="ChEBI" id="CHEBI:45764"/>
        <dbReference type="ChEBI" id="CHEBI:132124"/>
    </reaction>
</comment>
<comment type="cofactor">
    <cofactor evidence="1">
        <name>Mo-molybdopterin</name>
        <dbReference type="ChEBI" id="CHEBI:71302"/>
    </cofactor>
    <text evidence="1">Binds 1 Mo-molybdopterin (Mo-MPT) cofactor per subunit.</text>
</comment>
<comment type="subunit">
    <text evidence="1">Heterodimer of a catalytic subunit (MsrP) and a heme-binding subunit (MsrQ).</text>
</comment>
<comment type="subcellular location">
    <subcellularLocation>
        <location evidence="1">Periplasm</location>
    </subcellularLocation>
    <text evidence="1">Is attached to the inner membrane when interacting with the MsrQ subunit.</text>
</comment>
<comment type="PTM">
    <text evidence="1">Predicted to be exported by the Tat system. The position of the signal peptide cleavage has not been experimentally proven.</text>
</comment>
<comment type="similarity">
    <text evidence="1">Belongs to the MsrP family.</text>
</comment>
<sequence>MKKNQFLKESDVTAESVFFMKRRQVLKALGISAAALSLPHAAHADLLSWFKGNDRPPAPAGKPLEFSKPAAWQNNLPLTPVDKVSGYNNFYEFGLDKADPAANAGSLKTDPWTLKISGEVAKPLTLDHDDLTRRFPLEERIYRMRCVEAWSMVVPWIGFPLHKLLALAEPTSNAKYVAFETIYAPEQMPGQQDRFIGGGLKYPYVEGLRLDEAMHPLTLMTVGVYGKALPPQNGAPVRLIVPWKYGFKGIKSIVSIKLTRERPPTTWNLAAPDEYGFYANVNPHVDHPRWSQATERFIGSGGILDVQRQPTLLFNGYADQVASLYRGLDLRENF</sequence>
<accession>B2TWL4</accession>
<evidence type="ECO:0000255" key="1">
    <source>
        <dbReference type="HAMAP-Rule" id="MF_01206"/>
    </source>
</evidence>
<proteinExistence type="inferred from homology"/>
<keyword id="KW-0479">Metal-binding</keyword>
<keyword id="KW-0500">Molybdenum</keyword>
<keyword id="KW-0560">Oxidoreductase</keyword>
<keyword id="KW-0574">Periplasm</keyword>
<keyword id="KW-1185">Reference proteome</keyword>
<keyword id="KW-0732">Signal</keyword>
<dbReference type="EC" id="1.8.5.-" evidence="1"/>
<dbReference type="EMBL" id="CP001063">
    <property type="protein sequence ID" value="ACD09779.1"/>
    <property type="molecule type" value="Genomic_DNA"/>
</dbReference>
<dbReference type="RefSeq" id="WP_000740100.1">
    <property type="nucleotide sequence ID" value="NC_010658.1"/>
</dbReference>
<dbReference type="SMR" id="B2TWL4"/>
<dbReference type="STRING" id="344609.SbBS512_E0912"/>
<dbReference type="GeneID" id="75205791"/>
<dbReference type="KEGG" id="sbc:SbBS512_E0912"/>
<dbReference type="HOGENOM" id="CLU_045520_0_0_6"/>
<dbReference type="Proteomes" id="UP000001030">
    <property type="component" value="Chromosome"/>
</dbReference>
<dbReference type="GO" id="GO:0042597">
    <property type="term" value="C:periplasmic space"/>
    <property type="evidence" value="ECO:0007669"/>
    <property type="project" value="UniProtKB-SubCell"/>
</dbReference>
<dbReference type="GO" id="GO:0046872">
    <property type="term" value="F:metal ion binding"/>
    <property type="evidence" value="ECO:0007669"/>
    <property type="project" value="UniProtKB-KW"/>
</dbReference>
<dbReference type="GO" id="GO:0043546">
    <property type="term" value="F:molybdopterin cofactor binding"/>
    <property type="evidence" value="ECO:0007669"/>
    <property type="project" value="UniProtKB-UniRule"/>
</dbReference>
<dbReference type="GO" id="GO:0016672">
    <property type="term" value="F:oxidoreductase activity, acting on a sulfur group of donors, quinone or similar compound as acceptor"/>
    <property type="evidence" value="ECO:0007669"/>
    <property type="project" value="UniProtKB-UniRule"/>
</dbReference>
<dbReference type="GO" id="GO:0030091">
    <property type="term" value="P:protein repair"/>
    <property type="evidence" value="ECO:0007669"/>
    <property type="project" value="UniProtKB-UniRule"/>
</dbReference>
<dbReference type="CDD" id="cd02107">
    <property type="entry name" value="YedY_like_Moco"/>
    <property type="match status" value="1"/>
</dbReference>
<dbReference type="FunFam" id="3.90.420.10:FF:000001">
    <property type="entry name" value="Protein-methionine-sulfoxide reductase catalytic subunit MsrP"/>
    <property type="match status" value="1"/>
</dbReference>
<dbReference type="Gene3D" id="3.90.420.10">
    <property type="entry name" value="Oxidoreductase, molybdopterin-binding domain"/>
    <property type="match status" value="1"/>
</dbReference>
<dbReference type="HAMAP" id="MF_01206">
    <property type="entry name" value="MsrP"/>
    <property type="match status" value="1"/>
</dbReference>
<dbReference type="InterPro" id="IPR022867">
    <property type="entry name" value="MsrP"/>
</dbReference>
<dbReference type="InterPro" id="IPR000572">
    <property type="entry name" value="OxRdtase_Mopterin-bd_dom"/>
</dbReference>
<dbReference type="InterPro" id="IPR036374">
    <property type="entry name" value="OxRdtase_Mopterin-bd_sf"/>
</dbReference>
<dbReference type="InterPro" id="IPR006311">
    <property type="entry name" value="TAT_signal"/>
</dbReference>
<dbReference type="NCBIfam" id="NF003767">
    <property type="entry name" value="PRK05363.1"/>
    <property type="match status" value="1"/>
</dbReference>
<dbReference type="PANTHER" id="PTHR43032">
    <property type="entry name" value="PROTEIN-METHIONINE-SULFOXIDE REDUCTASE"/>
    <property type="match status" value="1"/>
</dbReference>
<dbReference type="PANTHER" id="PTHR43032:SF3">
    <property type="entry name" value="PROTEIN-METHIONINE-SULFOXIDE REDUCTASE CATALYTIC SUBUNIT MSRP"/>
    <property type="match status" value="1"/>
</dbReference>
<dbReference type="Pfam" id="PF00174">
    <property type="entry name" value="Oxidored_molyb"/>
    <property type="match status" value="1"/>
</dbReference>
<dbReference type="SUPFAM" id="SSF56524">
    <property type="entry name" value="Oxidoreductase molybdopterin-binding domain"/>
    <property type="match status" value="1"/>
</dbReference>
<dbReference type="PROSITE" id="PS51318">
    <property type="entry name" value="TAT"/>
    <property type="match status" value="1"/>
</dbReference>
<name>MSRP_SHIB3</name>
<protein>
    <recommendedName>
        <fullName evidence="1">Protein-methionine-sulfoxide reductase catalytic subunit MsrP</fullName>
        <ecNumber evidence="1">1.8.5.-</ecNumber>
    </recommendedName>
</protein>
<gene>
    <name evidence="1" type="primary">msrP</name>
    <name type="ordered locus">SbBS512_E0912</name>
</gene>
<feature type="signal peptide" description="Tat-type signal" evidence="1">
    <location>
        <begin position="1"/>
        <end position="44"/>
    </location>
</feature>
<feature type="chain" id="PRO_1000138726" description="Protein-methionine-sulfoxide reductase catalytic subunit MsrP" evidence="1">
    <location>
        <begin position="45"/>
        <end position="334"/>
    </location>
</feature>
<feature type="binding site" evidence="1">
    <location>
        <position position="88"/>
    </location>
    <ligand>
        <name>Mo-molybdopterin</name>
        <dbReference type="ChEBI" id="CHEBI:71302"/>
    </ligand>
</feature>
<feature type="binding site" evidence="1">
    <location>
        <begin position="91"/>
        <end position="92"/>
    </location>
    <ligand>
        <name>Mo-molybdopterin</name>
        <dbReference type="ChEBI" id="CHEBI:71302"/>
    </ligand>
</feature>
<feature type="binding site" evidence="1">
    <location>
        <position position="146"/>
    </location>
    <ligand>
        <name>Mo-molybdopterin</name>
        <dbReference type="ChEBI" id="CHEBI:71302"/>
    </ligand>
    <ligandPart>
        <name>Mo</name>
        <dbReference type="ChEBI" id="CHEBI:28685"/>
    </ligandPart>
</feature>
<feature type="binding site" evidence="1">
    <location>
        <position position="181"/>
    </location>
    <ligand>
        <name>Mo-molybdopterin</name>
        <dbReference type="ChEBI" id="CHEBI:71302"/>
    </ligand>
</feature>
<feature type="binding site" evidence="1">
    <location>
        <position position="233"/>
    </location>
    <ligand>
        <name>Mo-molybdopterin</name>
        <dbReference type="ChEBI" id="CHEBI:71302"/>
    </ligand>
</feature>
<feature type="binding site" evidence="1">
    <location>
        <position position="238"/>
    </location>
    <ligand>
        <name>Mo-molybdopterin</name>
        <dbReference type="ChEBI" id="CHEBI:71302"/>
    </ligand>
</feature>
<feature type="binding site" evidence="1">
    <location>
        <begin position="249"/>
        <end position="251"/>
    </location>
    <ligand>
        <name>Mo-molybdopterin</name>
        <dbReference type="ChEBI" id="CHEBI:71302"/>
    </ligand>
</feature>
<organism>
    <name type="scientific">Shigella boydii serotype 18 (strain CDC 3083-94 / BS512)</name>
    <dbReference type="NCBI Taxonomy" id="344609"/>
    <lineage>
        <taxon>Bacteria</taxon>
        <taxon>Pseudomonadati</taxon>
        <taxon>Pseudomonadota</taxon>
        <taxon>Gammaproteobacteria</taxon>
        <taxon>Enterobacterales</taxon>
        <taxon>Enterobacteriaceae</taxon>
        <taxon>Shigella</taxon>
    </lineage>
</organism>